<dbReference type="EC" id="3.1.3.24"/>
<dbReference type="EMBL" id="AC024261">
    <property type="protein sequence ID" value="AAG52615.1"/>
    <property type="molecule type" value="Genomic_DNA"/>
</dbReference>
<dbReference type="EMBL" id="CP002684">
    <property type="protein sequence ID" value="AEE32666.1"/>
    <property type="molecule type" value="Genomic_DNA"/>
</dbReference>
<dbReference type="PIR" id="D96552">
    <property type="entry name" value="D96552"/>
</dbReference>
<dbReference type="RefSeq" id="NP_175553.1">
    <property type="nucleotide sequence ID" value="NM_104020.3"/>
</dbReference>
<dbReference type="SMR" id="Q9C8J4"/>
<dbReference type="FunCoup" id="Q9C8J4">
    <property type="interactions" value="210"/>
</dbReference>
<dbReference type="STRING" id="3702.Q9C8J4"/>
<dbReference type="PaxDb" id="3702-AT1G51420.1"/>
<dbReference type="ProteomicsDB" id="232551"/>
<dbReference type="EnsemblPlants" id="AT1G51420.1">
    <property type="protein sequence ID" value="AT1G51420.1"/>
    <property type="gene ID" value="AT1G51420"/>
</dbReference>
<dbReference type="GeneID" id="841567"/>
<dbReference type="Gramene" id="AT1G51420.1">
    <property type="protein sequence ID" value="AT1G51420.1"/>
    <property type="gene ID" value="AT1G51420"/>
</dbReference>
<dbReference type="KEGG" id="ath:AT1G51420"/>
<dbReference type="Araport" id="AT1G51420"/>
<dbReference type="TAIR" id="AT1G51420">
    <property type="gene designation" value="SPP1"/>
</dbReference>
<dbReference type="eggNOG" id="ENOG502S8I4">
    <property type="taxonomic scope" value="Eukaryota"/>
</dbReference>
<dbReference type="HOGENOM" id="CLU_030534_1_0_1"/>
<dbReference type="InParanoid" id="Q9C8J4"/>
<dbReference type="OMA" id="VENCDAY"/>
<dbReference type="PhylomeDB" id="Q9C8J4"/>
<dbReference type="UniPathway" id="UPA00371">
    <property type="reaction ID" value="UER00546"/>
</dbReference>
<dbReference type="PRO" id="PR:Q9C8J4"/>
<dbReference type="Proteomes" id="UP000006548">
    <property type="component" value="Chromosome 1"/>
</dbReference>
<dbReference type="ExpressionAtlas" id="Q9C8J4">
    <property type="expression patterns" value="baseline and differential"/>
</dbReference>
<dbReference type="GO" id="GO:0000325">
    <property type="term" value="C:plant-type vacuole"/>
    <property type="evidence" value="ECO:0007005"/>
    <property type="project" value="TAIR"/>
</dbReference>
<dbReference type="GO" id="GO:0000287">
    <property type="term" value="F:magnesium ion binding"/>
    <property type="evidence" value="ECO:0007669"/>
    <property type="project" value="InterPro"/>
</dbReference>
<dbReference type="GO" id="GO:0050307">
    <property type="term" value="F:sucrose-phosphate phosphatase activity"/>
    <property type="evidence" value="ECO:0007669"/>
    <property type="project" value="UniProtKB-EC"/>
</dbReference>
<dbReference type="GO" id="GO:0005986">
    <property type="term" value="P:sucrose biosynthetic process"/>
    <property type="evidence" value="ECO:0007669"/>
    <property type="project" value="UniProtKB-UniPathway"/>
</dbReference>
<dbReference type="CDD" id="cd02605">
    <property type="entry name" value="HAD_SPP"/>
    <property type="match status" value="1"/>
</dbReference>
<dbReference type="FunFam" id="3.10.450.50:FF:000029">
    <property type="entry name" value="Probable sucrose-phosphatase 2"/>
    <property type="match status" value="1"/>
</dbReference>
<dbReference type="Gene3D" id="3.10.450.50">
    <property type="match status" value="1"/>
</dbReference>
<dbReference type="Gene3D" id="3.90.1070.10">
    <property type="match status" value="1"/>
</dbReference>
<dbReference type="Gene3D" id="3.40.50.1000">
    <property type="entry name" value="HAD superfamily/HAD-like"/>
    <property type="match status" value="1"/>
</dbReference>
<dbReference type="InterPro" id="IPR036412">
    <property type="entry name" value="HAD-like_sf"/>
</dbReference>
<dbReference type="InterPro" id="IPR006379">
    <property type="entry name" value="HAD-SF_hydro_IIB"/>
</dbReference>
<dbReference type="InterPro" id="IPR023214">
    <property type="entry name" value="HAD_sf"/>
</dbReference>
<dbReference type="InterPro" id="IPR032710">
    <property type="entry name" value="NTF2-like_dom_sf"/>
</dbReference>
<dbReference type="InterPro" id="IPR006380">
    <property type="entry name" value="SPP-like_dom"/>
</dbReference>
<dbReference type="InterPro" id="IPR013679">
    <property type="entry name" value="SPP_C"/>
</dbReference>
<dbReference type="InterPro" id="IPR051518">
    <property type="entry name" value="Sucrose_Phosphatase"/>
</dbReference>
<dbReference type="InterPro" id="IPR012847">
    <property type="entry name" value="Sucrose_phosphatase_pln/cyn"/>
</dbReference>
<dbReference type="NCBIfam" id="TIGR01484">
    <property type="entry name" value="HAD-SF-IIB"/>
    <property type="match status" value="1"/>
</dbReference>
<dbReference type="NCBIfam" id="TIGR01482">
    <property type="entry name" value="SPP-subfamily"/>
    <property type="match status" value="1"/>
</dbReference>
<dbReference type="NCBIfam" id="TIGR01485">
    <property type="entry name" value="SPP_plant-cyano"/>
    <property type="match status" value="1"/>
</dbReference>
<dbReference type="PANTHER" id="PTHR46521:SF7">
    <property type="entry name" value="SUCROSE-PHOSPHATASE 1-RELATED"/>
    <property type="match status" value="1"/>
</dbReference>
<dbReference type="PANTHER" id="PTHR46521">
    <property type="entry name" value="SUCROSE-PHOSPHATASE 2-RELATED"/>
    <property type="match status" value="1"/>
</dbReference>
<dbReference type="Pfam" id="PF05116">
    <property type="entry name" value="S6PP"/>
    <property type="match status" value="1"/>
</dbReference>
<dbReference type="Pfam" id="PF08472">
    <property type="entry name" value="S6PP_C"/>
    <property type="match status" value="1"/>
</dbReference>
<dbReference type="SFLD" id="SFLDS00003">
    <property type="entry name" value="Haloacid_Dehalogenase"/>
    <property type="match status" value="1"/>
</dbReference>
<dbReference type="SFLD" id="SFLDF00043">
    <property type="entry name" value="sucrose-phosphatase"/>
    <property type="match status" value="1"/>
</dbReference>
<dbReference type="SUPFAM" id="SSF56784">
    <property type="entry name" value="HAD-like"/>
    <property type="match status" value="1"/>
</dbReference>
<dbReference type="SUPFAM" id="SSF54427">
    <property type="entry name" value="NTF2-like"/>
    <property type="match status" value="1"/>
</dbReference>
<accession>Q9C8J4</accession>
<organism>
    <name type="scientific">Arabidopsis thaliana</name>
    <name type="common">Mouse-ear cress</name>
    <dbReference type="NCBI Taxonomy" id="3702"/>
    <lineage>
        <taxon>Eukaryota</taxon>
        <taxon>Viridiplantae</taxon>
        <taxon>Streptophyta</taxon>
        <taxon>Embryophyta</taxon>
        <taxon>Tracheophyta</taxon>
        <taxon>Spermatophyta</taxon>
        <taxon>Magnoliopsida</taxon>
        <taxon>eudicotyledons</taxon>
        <taxon>Gunneridae</taxon>
        <taxon>Pentapetalae</taxon>
        <taxon>rosids</taxon>
        <taxon>malvids</taxon>
        <taxon>Brassicales</taxon>
        <taxon>Brassicaceae</taxon>
        <taxon>Camelineae</taxon>
        <taxon>Arabidopsis</taxon>
    </lineage>
</organism>
<feature type="chain" id="PRO_0000350613" description="Probable sucrose-phosphatase 1">
    <location>
        <begin position="1"/>
        <end position="423"/>
    </location>
</feature>
<protein>
    <recommendedName>
        <fullName>Probable sucrose-phosphatase 1</fullName>
        <shortName>AtSPP1</shortName>
        <ecNumber>3.1.3.24</ecNumber>
    </recommendedName>
</protein>
<name>SPP1_ARATH</name>
<evidence type="ECO:0000250" key="1"/>
<evidence type="ECO:0000305" key="2"/>
<comment type="function">
    <text evidence="1">Catalyzes the final step of sucrose synthesis.</text>
</comment>
<comment type="catalytic activity">
    <reaction>
        <text>sucrose 6(F)-phosphate + H2O = sucrose + phosphate</text>
        <dbReference type="Rhea" id="RHEA:19289"/>
        <dbReference type="ChEBI" id="CHEBI:15377"/>
        <dbReference type="ChEBI" id="CHEBI:17992"/>
        <dbReference type="ChEBI" id="CHEBI:43474"/>
        <dbReference type="ChEBI" id="CHEBI:57723"/>
        <dbReference type="EC" id="3.1.3.24"/>
    </reaction>
</comment>
<comment type="cofactor">
    <cofactor evidence="1">
        <name>Mg(2+)</name>
        <dbReference type="ChEBI" id="CHEBI:18420"/>
    </cofactor>
</comment>
<comment type="pathway">
    <text>Glycan biosynthesis; sucrose biosynthesis; sucrose from D-fructose 6-phosphate and UDP-alpha-D-glucose: step 2/2.</text>
</comment>
<comment type="subunit">
    <text evidence="1">Homodimer.</text>
</comment>
<comment type="similarity">
    <text evidence="2">Belongs to the sucrose phosphatase family.</text>
</comment>
<proteinExistence type="evidence at transcript level"/>
<gene>
    <name type="primary">SPP1</name>
    <name type="ordered locus">At1g51420</name>
    <name type="ORF">F5D21.9</name>
</gene>
<keyword id="KW-0378">Hydrolase</keyword>
<keyword id="KW-0460">Magnesium</keyword>
<keyword id="KW-1185">Reference proteome</keyword>
<sequence>MERLTSPPRLMIVSDLDETMVDHHKDPENLALLRFNSLWEDAYRHDSLLVFSTGRAQTMYKKLRKEKPLLTPDVIITSVGTEIAYGNSMVPDDNWVEILNKKWDRGIVQEETSKFPELTLQGETEQRPHKLSFNIDKSKVKAVTKELSPRLEKRGVDVKFIFSGGNAFDVLAKGGGKGQALAYLLKKLKTEGKLPINTLACGDSGNDTELFTIPNVYGVMVSNAQEELLEWYAENAKDNANIIHASERCAGGITQAIGHFKLGPNLSPRDVSDFLECKADNVNPGHEVVKFFLFYERWRRGEVENCTTYTSSLKASCHPSGVFVHPSGAEKSLRDTIDELGKYYGDKKGKKFRVWTDQVLATDTTPGTWIVKLDKWEQTGDERKCCTTTVKFTSKEGEGFVWEHVQQIWSEETEIKDDSNWII</sequence>
<reference key="1">
    <citation type="journal article" date="2000" name="Nature">
        <title>Sequence and analysis of chromosome 1 of the plant Arabidopsis thaliana.</title>
        <authorList>
            <person name="Theologis A."/>
            <person name="Ecker J.R."/>
            <person name="Palm C.J."/>
            <person name="Federspiel N.A."/>
            <person name="Kaul S."/>
            <person name="White O."/>
            <person name="Alonso J."/>
            <person name="Altafi H."/>
            <person name="Araujo R."/>
            <person name="Bowman C.L."/>
            <person name="Brooks S.Y."/>
            <person name="Buehler E."/>
            <person name="Chan A."/>
            <person name="Chao Q."/>
            <person name="Chen H."/>
            <person name="Cheuk R.F."/>
            <person name="Chin C.W."/>
            <person name="Chung M.K."/>
            <person name="Conn L."/>
            <person name="Conway A.B."/>
            <person name="Conway A.R."/>
            <person name="Creasy T.H."/>
            <person name="Dewar K."/>
            <person name="Dunn P."/>
            <person name="Etgu P."/>
            <person name="Feldblyum T.V."/>
            <person name="Feng J.-D."/>
            <person name="Fong B."/>
            <person name="Fujii C.Y."/>
            <person name="Gill J.E."/>
            <person name="Goldsmith A.D."/>
            <person name="Haas B."/>
            <person name="Hansen N.F."/>
            <person name="Hughes B."/>
            <person name="Huizar L."/>
            <person name="Hunter J.L."/>
            <person name="Jenkins J."/>
            <person name="Johnson-Hopson C."/>
            <person name="Khan S."/>
            <person name="Khaykin E."/>
            <person name="Kim C.J."/>
            <person name="Koo H.L."/>
            <person name="Kremenetskaia I."/>
            <person name="Kurtz D.B."/>
            <person name="Kwan A."/>
            <person name="Lam B."/>
            <person name="Langin-Hooper S."/>
            <person name="Lee A."/>
            <person name="Lee J.M."/>
            <person name="Lenz C.A."/>
            <person name="Li J.H."/>
            <person name="Li Y.-P."/>
            <person name="Lin X."/>
            <person name="Liu S.X."/>
            <person name="Liu Z.A."/>
            <person name="Luros J.S."/>
            <person name="Maiti R."/>
            <person name="Marziali A."/>
            <person name="Militscher J."/>
            <person name="Miranda M."/>
            <person name="Nguyen M."/>
            <person name="Nierman W.C."/>
            <person name="Osborne B.I."/>
            <person name="Pai G."/>
            <person name="Peterson J."/>
            <person name="Pham P.K."/>
            <person name="Rizzo M."/>
            <person name="Rooney T."/>
            <person name="Rowley D."/>
            <person name="Sakano H."/>
            <person name="Salzberg S.L."/>
            <person name="Schwartz J.R."/>
            <person name="Shinn P."/>
            <person name="Southwick A.M."/>
            <person name="Sun H."/>
            <person name="Tallon L.J."/>
            <person name="Tambunga G."/>
            <person name="Toriumi M.J."/>
            <person name="Town C.D."/>
            <person name="Utterback T."/>
            <person name="Van Aken S."/>
            <person name="Vaysberg M."/>
            <person name="Vysotskaia V.S."/>
            <person name="Walker M."/>
            <person name="Wu D."/>
            <person name="Yu G."/>
            <person name="Fraser C.M."/>
            <person name="Venter J.C."/>
            <person name="Davis R.W."/>
        </authorList>
    </citation>
    <scope>NUCLEOTIDE SEQUENCE [LARGE SCALE GENOMIC DNA]</scope>
    <source>
        <strain>cv. Columbia</strain>
    </source>
</reference>
<reference key="2">
    <citation type="journal article" date="2017" name="Plant J.">
        <title>Araport11: a complete reannotation of the Arabidopsis thaliana reference genome.</title>
        <authorList>
            <person name="Cheng C.Y."/>
            <person name="Krishnakumar V."/>
            <person name="Chan A.P."/>
            <person name="Thibaud-Nissen F."/>
            <person name="Schobel S."/>
            <person name="Town C.D."/>
        </authorList>
    </citation>
    <scope>GENOME REANNOTATION</scope>
    <source>
        <strain>cv. Columbia</strain>
    </source>
</reference>
<reference key="3">
    <citation type="journal article" date="2003" name="Gene">
        <title>Sucrose-phosphatase gene families in plants.</title>
        <authorList>
            <person name="Lunn J.E."/>
        </authorList>
    </citation>
    <scope>GENE FAMILY</scope>
    <scope>NOMENCLATURE</scope>
</reference>